<sequence length="120" mass="12820">MVKLTSIAAGVAAIAATASATTTLAQSDERVNLVELGVYVSDIRAHLAQYYSFQAAHPTETYPIEVAEAVFNYGDFTTMLTGIAPDQVTRMITGVPWYSSRLKPAISSALSKDGIYTIAN</sequence>
<keyword id="KW-0472">Membrane</keyword>
<keyword id="KW-1185">Reference proteome</keyword>
<keyword id="KW-0812">Transmembrane</keyword>
<keyword id="KW-1133">Transmembrane helix</keyword>
<dbReference type="EMBL" id="U18779">
    <property type="protein sequence ID" value="AAB64993.1"/>
    <property type="molecule type" value="Genomic_DNA"/>
</dbReference>
<dbReference type="EMBL" id="BK006939">
    <property type="protein sequence ID" value="DAA07605.1"/>
    <property type="molecule type" value="Genomic_DNA"/>
</dbReference>
<dbReference type="PIR" id="S30828">
    <property type="entry name" value="S30828"/>
</dbReference>
<dbReference type="RefSeq" id="NP_010865.1">
    <property type="nucleotide sequence ID" value="NM_001178864.1"/>
</dbReference>
<dbReference type="SMR" id="P32612"/>
<dbReference type="BioGRID" id="36681">
    <property type="interactions" value="31"/>
</dbReference>
<dbReference type="DIP" id="DIP-4138N"/>
<dbReference type="FunCoup" id="P32612">
    <property type="interactions" value="27"/>
</dbReference>
<dbReference type="STRING" id="4932.YEL049W"/>
<dbReference type="PaxDb" id="4932-YEL049W"/>
<dbReference type="EnsemblFungi" id="YEL049W_mRNA">
    <property type="protein sequence ID" value="YEL049W"/>
    <property type="gene ID" value="YEL049W"/>
</dbReference>
<dbReference type="GeneID" id="856662"/>
<dbReference type="KEGG" id="sce:YEL049W"/>
<dbReference type="AGR" id="SGD:S000000775"/>
<dbReference type="SGD" id="S000000775">
    <property type="gene designation" value="PAU2"/>
</dbReference>
<dbReference type="VEuPathDB" id="FungiDB:YEL049W"/>
<dbReference type="eggNOG" id="ENOG502SR1B">
    <property type="taxonomic scope" value="Eukaryota"/>
</dbReference>
<dbReference type="GeneTree" id="ENSGT00940000176276"/>
<dbReference type="HOGENOM" id="CLU_136376_0_0_1"/>
<dbReference type="InParanoid" id="P32612"/>
<dbReference type="OrthoDB" id="4059055at2759"/>
<dbReference type="BioCyc" id="YEAST:G3O-30167-MONOMER"/>
<dbReference type="BioGRID-ORCS" id="856662">
    <property type="hits" value="0 hits in 10 CRISPR screens"/>
</dbReference>
<dbReference type="PRO" id="PR:P32612"/>
<dbReference type="Proteomes" id="UP000002311">
    <property type="component" value="Chromosome V"/>
</dbReference>
<dbReference type="RNAct" id="P32612">
    <property type="molecule type" value="protein"/>
</dbReference>
<dbReference type="GO" id="GO:0009277">
    <property type="term" value="C:fungal-type cell wall"/>
    <property type="evidence" value="ECO:0000318"/>
    <property type="project" value="GO_Central"/>
</dbReference>
<dbReference type="GO" id="GO:0016020">
    <property type="term" value="C:membrane"/>
    <property type="evidence" value="ECO:0007669"/>
    <property type="project" value="UniProtKB-SubCell"/>
</dbReference>
<dbReference type="GO" id="GO:0005199">
    <property type="term" value="F:structural constituent of cell wall"/>
    <property type="evidence" value="ECO:0000318"/>
    <property type="project" value="GO_Central"/>
</dbReference>
<dbReference type="GO" id="GO:0031505">
    <property type="term" value="P:fungal-type cell wall organization"/>
    <property type="evidence" value="ECO:0000318"/>
    <property type="project" value="GO_Central"/>
</dbReference>
<dbReference type="InterPro" id="IPR000992">
    <property type="entry name" value="SRP1_TIP1"/>
</dbReference>
<dbReference type="InterPro" id="IPR050788">
    <property type="entry name" value="Yeast_SRP1/TIP1_CWP"/>
</dbReference>
<dbReference type="PANTHER" id="PTHR31002:SF34">
    <property type="entry name" value="CELL WALL PROTEIN CWP1-RELATED"/>
    <property type="match status" value="1"/>
</dbReference>
<dbReference type="PANTHER" id="PTHR31002">
    <property type="entry name" value="SERIPAUPERIN"/>
    <property type="match status" value="1"/>
</dbReference>
<dbReference type="Pfam" id="PF00660">
    <property type="entry name" value="SRP1_TIP1"/>
    <property type="match status" value="1"/>
</dbReference>
<dbReference type="PROSITE" id="PS00724">
    <property type="entry name" value="SRP1_TIP1"/>
    <property type="match status" value="1"/>
</dbReference>
<comment type="subcellular location">
    <subcellularLocation>
        <location evidence="2">Membrane</location>
        <topology evidence="2">Single-pass membrane protein</topology>
    </subcellularLocation>
</comment>
<comment type="similarity">
    <text evidence="2">Belongs to the SRP1/TIP1 family. Seripauperin subfamily.</text>
</comment>
<protein>
    <recommendedName>
        <fullName>Seripauperin-2</fullName>
    </recommendedName>
</protein>
<accession>P32612</accession>
<accession>D3DLK1</accession>
<proteinExistence type="inferred from homology"/>
<reference key="1">
    <citation type="journal article" date="1997" name="Nature">
        <title>The nucleotide sequence of Saccharomyces cerevisiae chromosome V.</title>
        <authorList>
            <person name="Dietrich F.S."/>
            <person name="Mulligan J.T."/>
            <person name="Hennessy K.M."/>
            <person name="Yelton M.A."/>
            <person name="Allen E."/>
            <person name="Araujo R."/>
            <person name="Aviles E."/>
            <person name="Berno A."/>
            <person name="Brennan T."/>
            <person name="Carpenter J."/>
            <person name="Chen E."/>
            <person name="Cherry J.M."/>
            <person name="Chung E."/>
            <person name="Duncan M."/>
            <person name="Guzman E."/>
            <person name="Hartzell G."/>
            <person name="Hunicke-Smith S."/>
            <person name="Hyman R.W."/>
            <person name="Kayser A."/>
            <person name="Komp C."/>
            <person name="Lashkari D."/>
            <person name="Lew H."/>
            <person name="Lin D."/>
            <person name="Mosedale D."/>
            <person name="Nakahara K."/>
            <person name="Namath A."/>
            <person name="Norgren R."/>
            <person name="Oefner P."/>
            <person name="Oh C."/>
            <person name="Petel F.X."/>
            <person name="Roberts D."/>
            <person name="Sehl P."/>
            <person name="Schramm S."/>
            <person name="Shogren T."/>
            <person name="Smith V."/>
            <person name="Taylor P."/>
            <person name="Wei Y."/>
            <person name="Botstein D."/>
            <person name="Davis R.W."/>
        </authorList>
    </citation>
    <scope>NUCLEOTIDE SEQUENCE [LARGE SCALE GENOMIC DNA]</scope>
    <source>
        <strain>ATCC 204508 / S288c</strain>
    </source>
</reference>
<reference key="2">
    <citation type="journal article" date="2014" name="G3 (Bethesda)">
        <title>The reference genome sequence of Saccharomyces cerevisiae: Then and now.</title>
        <authorList>
            <person name="Engel S.R."/>
            <person name="Dietrich F.S."/>
            <person name="Fisk D.G."/>
            <person name="Binkley G."/>
            <person name="Balakrishnan R."/>
            <person name="Costanzo M.C."/>
            <person name="Dwight S.S."/>
            <person name="Hitz B.C."/>
            <person name="Karra K."/>
            <person name="Nash R.S."/>
            <person name="Weng S."/>
            <person name="Wong E.D."/>
            <person name="Lloyd P."/>
            <person name="Skrzypek M.S."/>
            <person name="Miyasato S.R."/>
            <person name="Simison M."/>
            <person name="Cherry J.M."/>
        </authorList>
    </citation>
    <scope>GENOME REANNOTATION</scope>
    <source>
        <strain>ATCC 204508 / S288c</strain>
    </source>
</reference>
<reference key="3">
    <citation type="journal article" date="1994" name="Gene">
        <title>Seripauperins of Saccharomyces cerevisiae: a new multigene family encoding serine-poor relatives of serine-rich proteins.</title>
        <authorList>
            <person name="Viswanathan M."/>
            <person name="Muthukumar G."/>
            <person name="Cong Y.-S."/>
            <person name="Lenard J."/>
        </authorList>
    </citation>
    <scope>GENE NAME</scope>
</reference>
<name>PAU2_YEAST</name>
<evidence type="ECO:0000255" key="1"/>
<evidence type="ECO:0000305" key="2"/>
<gene>
    <name type="primary">PAU2</name>
    <name type="ordered locus">YEL049W</name>
    <name type="ORF">SYGP-ORF12</name>
</gene>
<organism>
    <name type="scientific">Saccharomyces cerevisiae (strain ATCC 204508 / S288c)</name>
    <name type="common">Baker's yeast</name>
    <dbReference type="NCBI Taxonomy" id="559292"/>
    <lineage>
        <taxon>Eukaryota</taxon>
        <taxon>Fungi</taxon>
        <taxon>Dikarya</taxon>
        <taxon>Ascomycota</taxon>
        <taxon>Saccharomycotina</taxon>
        <taxon>Saccharomycetes</taxon>
        <taxon>Saccharomycetales</taxon>
        <taxon>Saccharomycetaceae</taxon>
        <taxon>Saccharomyces</taxon>
    </lineage>
</organism>
<feature type="chain" id="PRO_0000203779" description="Seripauperin-2">
    <location>
        <begin position="1"/>
        <end position="120"/>
    </location>
</feature>
<feature type="transmembrane region" description="Helical" evidence="1">
    <location>
        <begin position="7"/>
        <end position="24"/>
    </location>
</feature>